<name>MSHA_MYCLB</name>
<proteinExistence type="inferred from homology"/>
<dbReference type="EC" id="2.4.1.250" evidence="1"/>
<dbReference type="EMBL" id="FM211192">
    <property type="protein sequence ID" value="CAR72542.1"/>
    <property type="molecule type" value="Genomic_DNA"/>
</dbReference>
<dbReference type="SMR" id="B8ZT88"/>
<dbReference type="CAZy" id="GT4">
    <property type="family name" value="Glycosyltransferase Family 4"/>
</dbReference>
<dbReference type="KEGG" id="mlb:MLBr02443"/>
<dbReference type="HOGENOM" id="CLU_009583_2_3_11"/>
<dbReference type="Proteomes" id="UP000006900">
    <property type="component" value="Chromosome"/>
</dbReference>
<dbReference type="GO" id="GO:0008375">
    <property type="term" value="F:acetylglucosaminyltransferase activity"/>
    <property type="evidence" value="ECO:0007669"/>
    <property type="project" value="UniProtKB-UniRule"/>
</dbReference>
<dbReference type="GO" id="GO:0102710">
    <property type="term" value="F:D-inositol-3-phosphate glycosyltransferase activity"/>
    <property type="evidence" value="ECO:0007669"/>
    <property type="project" value="UniProtKB-EC"/>
</dbReference>
<dbReference type="GO" id="GO:0000287">
    <property type="term" value="F:magnesium ion binding"/>
    <property type="evidence" value="ECO:0007669"/>
    <property type="project" value="UniProtKB-UniRule"/>
</dbReference>
<dbReference type="GO" id="GO:0010125">
    <property type="term" value="P:mycothiol biosynthetic process"/>
    <property type="evidence" value="ECO:0007669"/>
    <property type="project" value="UniProtKB-UniRule"/>
</dbReference>
<dbReference type="FunFam" id="3.40.50.2000:FF:000123">
    <property type="entry name" value="D-inositol-3-phosphate glycosyltransferase"/>
    <property type="match status" value="1"/>
</dbReference>
<dbReference type="Gene3D" id="3.40.50.2000">
    <property type="entry name" value="Glycogen Phosphorylase B"/>
    <property type="match status" value="2"/>
</dbReference>
<dbReference type="HAMAP" id="MF_01695">
    <property type="entry name" value="MshA"/>
    <property type="match status" value="1"/>
</dbReference>
<dbReference type="InterPro" id="IPR001296">
    <property type="entry name" value="Glyco_trans_1"/>
</dbReference>
<dbReference type="InterPro" id="IPR028098">
    <property type="entry name" value="Glyco_trans_4-like_N"/>
</dbReference>
<dbReference type="InterPro" id="IPR017814">
    <property type="entry name" value="Mycothiol_biosynthesis_MshA"/>
</dbReference>
<dbReference type="NCBIfam" id="TIGR03449">
    <property type="entry name" value="mycothiol_MshA"/>
    <property type="match status" value="1"/>
</dbReference>
<dbReference type="PANTHER" id="PTHR12526:SF510">
    <property type="entry name" value="D-INOSITOL 3-PHOSPHATE GLYCOSYLTRANSFERASE"/>
    <property type="match status" value="1"/>
</dbReference>
<dbReference type="PANTHER" id="PTHR12526">
    <property type="entry name" value="GLYCOSYLTRANSFERASE"/>
    <property type="match status" value="1"/>
</dbReference>
<dbReference type="Pfam" id="PF13579">
    <property type="entry name" value="Glyco_trans_4_4"/>
    <property type="match status" value="1"/>
</dbReference>
<dbReference type="Pfam" id="PF00534">
    <property type="entry name" value="Glycos_transf_1"/>
    <property type="match status" value="1"/>
</dbReference>
<dbReference type="SUPFAM" id="SSF53756">
    <property type="entry name" value="UDP-Glycosyltransferase/glycogen phosphorylase"/>
    <property type="match status" value="1"/>
</dbReference>
<keyword id="KW-0328">Glycosyltransferase</keyword>
<keyword id="KW-0460">Magnesium</keyword>
<keyword id="KW-0479">Metal-binding</keyword>
<keyword id="KW-0808">Transferase</keyword>
<feature type="chain" id="PRO_0000400135" description="D-inositol 3-phosphate glycosyltransferase">
    <location>
        <begin position="1"/>
        <end position="428"/>
    </location>
</feature>
<feature type="binding site" evidence="1">
    <location>
        <position position="5"/>
    </location>
    <ligand>
        <name>1D-myo-inositol 3-phosphate</name>
        <dbReference type="ChEBI" id="CHEBI:58401"/>
    </ligand>
</feature>
<feature type="binding site" evidence="1">
    <location>
        <begin position="11"/>
        <end position="12"/>
    </location>
    <ligand>
        <name>UDP-N-acetyl-alpha-D-glucosamine</name>
        <dbReference type="ChEBI" id="CHEBI:57705"/>
    </ligand>
</feature>
<feature type="binding site" evidence="1">
    <location>
        <begin position="16"/>
        <end position="21"/>
    </location>
    <ligand>
        <name>1D-myo-inositol 3-phosphate</name>
        <dbReference type="ChEBI" id="CHEBI:58401"/>
    </ligand>
</feature>
<feature type="binding site" evidence="1">
    <location>
        <position position="19"/>
    </location>
    <ligand>
        <name>UDP-N-acetyl-alpha-D-glucosamine</name>
        <dbReference type="ChEBI" id="CHEBI:57705"/>
    </ligand>
</feature>
<feature type="binding site" evidence="1">
    <location>
        <position position="74"/>
    </location>
    <ligand>
        <name>1D-myo-inositol 3-phosphate</name>
        <dbReference type="ChEBI" id="CHEBI:58401"/>
    </ligand>
</feature>
<feature type="binding site" evidence="1">
    <location>
        <position position="107"/>
    </location>
    <ligand>
        <name>1D-myo-inositol 3-phosphate</name>
        <dbReference type="ChEBI" id="CHEBI:58401"/>
    </ligand>
</feature>
<feature type="binding site" evidence="1">
    <location>
        <position position="131"/>
    </location>
    <ligand>
        <name>1D-myo-inositol 3-phosphate</name>
        <dbReference type="ChEBI" id="CHEBI:58401"/>
    </ligand>
</feature>
<feature type="binding site" evidence="1">
    <location>
        <position position="151"/>
    </location>
    <ligand>
        <name>1D-myo-inositol 3-phosphate</name>
        <dbReference type="ChEBI" id="CHEBI:58401"/>
    </ligand>
</feature>
<feature type="binding site" evidence="1">
    <location>
        <position position="225"/>
    </location>
    <ligand>
        <name>UDP-N-acetyl-alpha-D-glucosamine</name>
        <dbReference type="ChEBI" id="CHEBI:57705"/>
    </ligand>
</feature>
<feature type="binding site" evidence="1">
    <location>
        <position position="230"/>
    </location>
    <ligand>
        <name>UDP-N-acetyl-alpha-D-glucosamine</name>
        <dbReference type="ChEBI" id="CHEBI:57705"/>
    </ligand>
</feature>
<feature type="binding site" evidence="1">
    <location>
        <position position="283"/>
    </location>
    <ligand>
        <name>UDP-N-acetyl-alpha-D-glucosamine</name>
        <dbReference type="ChEBI" id="CHEBI:57705"/>
    </ligand>
</feature>
<feature type="binding site" evidence="1">
    <location>
        <position position="292"/>
    </location>
    <ligand>
        <name>Mg(2+)</name>
        <dbReference type="ChEBI" id="CHEBI:18420"/>
    </ligand>
</feature>
<feature type="binding site" evidence="1">
    <location>
        <position position="293"/>
    </location>
    <ligand>
        <name>Mg(2+)</name>
        <dbReference type="ChEBI" id="CHEBI:18420"/>
    </ligand>
</feature>
<feature type="binding site" evidence="1">
    <location>
        <position position="295"/>
    </location>
    <ligand>
        <name>Mg(2+)</name>
        <dbReference type="ChEBI" id="CHEBI:18420"/>
    </ligand>
</feature>
<feature type="binding site" evidence="1">
    <location>
        <position position="305"/>
    </location>
    <ligand>
        <name>UDP-N-acetyl-alpha-D-glucosamine</name>
        <dbReference type="ChEBI" id="CHEBI:57705"/>
    </ligand>
</feature>
<feature type="binding site" evidence="1">
    <location>
        <position position="313"/>
    </location>
    <ligand>
        <name>UDP-N-acetyl-alpha-D-glucosamine</name>
        <dbReference type="ChEBI" id="CHEBI:57705"/>
    </ligand>
</feature>
<feature type="binding site" evidence="1">
    <location>
        <position position="319"/>
    </location>
    <ligand>
        <name>Mg(2+)</name>
        <dbReference type="ChEBI" id="CHEBI:18420"/>
    </ligand>
</feature>
<evidence type="ECO:0000255" key="1">
    <source>
        <dbReference type="HAMAP-Rule" id="MF_01695"/>
    </source>
</evidence>
<organism>
    <name type="scientific">Mycobacterium leprae (strain Br4923)</name>
    <dbReference type="NCBI Taxonomy" id="561304"/>
    <lineage>
        <taxon>Bacteria</taxon>
        <taxon>Bacillati</taxon>
        <taxon>Actinomycetota</taxon>
        <taxon>Actinomycetes</taxon>
        <taxon>Mycobacteriales</taxon>
        <taxon>Mycobacteriaceae</taxon>
        <taxon>Mycobacterium</taxon>
    </lineage>
</organism>
<gene>
    <name evidence="1" type="primary">mshA</name>
    <name type="ordered locus">MLBr02443</name>
</gene>
<accession>B8ZT88</accession>
<comment type="function">
    <text evidence="1">Catalyzes the transfer of a N-acetyl-glucosamine moiety to 1D-myo-inositol 3-phosphate to produce 1D-myo-inositol 2-acetamido-2-deoxy-glucopyranoside 3-phosphate in the mycothiol biosynthesis pathway.</text>
</comment>
<comment type="catalytic activity">
    <reaction evidence="1">
        <text>1D-myo-inositol 3-phosphate + UDP-N-acetyl-alpha-D-glucosamine = 1D-myo-inositol 2-acetamido-2-deoxy-alpha-D-glucopyranoside 3-phosphate + UDP + H(+)</text>
        <dbReference type="Rhea" id="RHEA:26188"/>
        <dbReference type="ChEBI" id="CHEBI:15378"/>
        <dbReference type="ChEBI" id="CHEBI:57705"/>
        <dbReference type="ChEBI" id="CHEBI:58223"/>
        <dbReference type="ChEBI" id="CHEBI:58401"/>
        <dbReference type="ChEBI" id="CHEBI:58892"/>
        <dbReference type="EC" id="2.4.1.250"/>
    </reaction>
</comment>
<comment type="subunit">
    <text evidence="1">Homodimer.</text>
</comment>
<comment type="similarity">
    <text evidence="1">Belongs to the glycosyltransferase group 1 family. MshA subfamily.</text>
</comment>
<reference key="1">
    <citation type="journal article" date="2009" name="Nat. Genet.">
        <title>Comparative genomic and phylogeographic analysis of Mycobacterium leprae.</title>
        <authorList>
            <person name="Monot M."/>
            <person name="Honore N."/>
            <person name="Garnier T."/>
            <person name="Zidane N."/>
            <person name="Sherafi D."/>
            <person name="Paniz-Mondolfi A."/>
            <person name="Matsuoka M."/>
            <person name="Taylor G.M."/>
            <person name="Donoghue H.D."/>
            <person name="Bouwman A."/>
            <person name="Mays S."/>
            <person name="Watson C."/>
            <person name="Lockwood D."/>
            <person name="Khamispour A."/>
            <person name="Dowlati Y."/>
            <person name="Jianping S."/>
            <person name="Rea T.H."/>
            <person name="Vera-Cabrera L."/>
            <person name="Stefani M.M."/>
            <person name="Banu S."/>
            <person name="Macdonald M."/>
            <person name="Sapkota B.R."/>
            <person name="Spencer J.S."/>
            <person name="Thomas J."/>
            <person name="Harshman K."/>
            <person name="Singh P."/>
            <person name="Busso P."/>
            <person name="Gattiker A."/>
            <person name="Rougemont J."/>
            <person name="Brennan P.J."/>
            <person name="Cole S.T."/>
        </authorList>
    </citation>
    <scope>NUCLEOTIDE SEQUENCE [LARGE SCALE GENOMIC DNA]</scope>
    <source>
        <strain>Br4923</strain>
    </source>
</reference>
<protein>
    <recommendedName>
        <fullName>D-inositol 3-phosphate glycosyltransferase</fullName>
        <ecNumber evidence="1">2.4.1.250</ecNumber>
    </recommendedName>
    <alternativeName>
        <fullName evidence="1">N-acetylglucosamine-inositol-phosphate N-acetylglucosaminyltransferase</fullName>
        <shortName evidence="1">GlcNAc-Ins-P N-acetylglucosaminyltransferase</shortName>
    </alternativeName>
</protein>
<sequence length="428" mass="45292">MLAVHTSPLAQPGIGDAGGMNVYVLQSALHLARRGIEVEIFTRATASADPPIVWVAPGVLVRNVVAGPFEGLDKYDLPTQLCAFAAGVLRAEAAHEPGYYDIVHSHYWLSGQVGWLARDRWAVPLVHTAHTLAAVKNAALADGDAAEPPLRSVGEQQVVDEADRMIVNTDDEARQLISIHRADPAKIDVAHPGVDLDMFRPGDRRAARAALGLPLDGNVVAFVGRIQPLKAPDIVLRAAAKLPQVRIVVAGGPSGSGLASPDGLVRLADELGITARVTFLPPQSRTNLATVFQAADLVAVPSYSESFGLVAVEAQACGTPVVAAAVGGLPVAVRDGVTGTLVFGHNVGHWADAVDQLLRLSAGPQARAISRAAVVHAAQFSWDNTTDALLASYRRAIGDFTATRQHRVRDLVATRKPRRWISRRGMGA</sequence>